<sequence>MARGPGLAPPPLRLPLLLLVLAAVTGHTAAQDNCTCPTNKMTVCSPDGPGGRCQCRALGSGMAVDCSTLTSKCLLLKARMSAPKNARTLVRPSEHALVDNDGLYDPDCDPEGRFKARQCNQTSVCWCVNSVGVRRTDKGDLSLRCDELVRTHHILIDLRHRPTAGAFNHSDLDAELRRLFRERYRLHPKFVAAVHYEQPTIQIELRQNTSQKAAGDVDIGDAAYYFERDIKGESLFQGRGGLDLRVRGEPLQVERTLIYYLDEIPPKFSMKRLTAGLIAVIVVVVVALVAGMAVLVITNRRKSGKYKKVEIKELGELRKEPSL</sequence>
<evidence type="ECO:0000255" key="1"/>
<evidence type="ECO:0000255" key="2">
    <source>
        <dbReference type="PROSITE-ProRule" id="PRU00500"/>
    </source>
</evidence>
<evidence type="ECO:0000269" key="3">
    <source>
    </source>
</evidence>
<evidence type="ECO:0000269" key="4">
    <source>
    </source>
</evidence>
<evidence type="ECO:0000269" key="5">
    <source>
    </source>
</evidence>
<evidence type="ECO:0000269" key="6">
    <source>
    </source>
</evidence>
<evidence type="ECO:0000269" key="7">
    <source>
    </source>
</evidence>
<evidence type="ECO:0000305" key="8"/>
<evidence type="ECO:0007829" key="9">
    <source>
        <dbReference type="PDB" id="2MAE"/>
    </source>
</evidence>
<evidence type="ECO:0007829" key="10">
    <source>
        <dbReference type="PDB" id="7E5M"/>
    </source>
</evidence>
<evidence type="ECO:0007829" key="11">
    <source>
        <dbReference type="PDB" id="7PEE"/>
    </source>
</evidence>
<proteinExistence type="evidence at protein level"/>
<organism>
    <name type="scientific">Homo sapiens</name>
    <name type="common">Human</name>
    <dbReference type="NCBI Taxonomy" id="9606"/>
    <lineage>
        <taxon>Eukaryota</taxon>
        <taxon>Metazoa</taxon>
        <taxon>Chordata</taxon>
        <taxon>Craniata</taxon>
        <taxon>Vertebrata</taxon>
        <taxon>Euteleostomi</taxon>
        <taxon>Mammalia</taxon>
        <taxon>Eutheria</taxon>
        <taxon>Euarchontoglires</taxon>
        <taxon>Primates</taxon>
        <taxon>Haplorrhini</taxon>
        <taxon>Catarrhini</taxon>
        <taxon>Hominidae</taxon>
        <taxon>Homo</taxon>
    </lineage>
</organism>
<reference key="1">
    <citation type="journal article" date="1989" name="Proc. Natl. Acad. Sci. U.S.A.">
        <title>Sequence investigation of the major gastrointestinal tumor-associated antigen gene family, GA733.</title>
        <authorList>
            <person name="Linnenbach A.J."/>
            <person name="Wojcierowski J."/>
            <person name="Wu S."/>
            <person name="Pyrc J.J."/>
            <person name="Ross A.H."/>
            <person name="Dietzschold B."/>
            <person name="Speicher D."/>
            <person name="Koprowski H."/>
        </authorList>
    </citation>
    <scope>NUCLEOTIDE SEQUENCE [GENOMIC DNA]</scope>
    <scope>VARIANT ASP-147</scope>
    <source>
        <tissue>Placenta</tissue>
    </source>
</reference>
<reference key="2">
    <citation type="journal article" date="1993" name="Mol. Cell. Biol.">
        <title>Retroposition in a family of carcinoma-associated antigen genes.</title>
        <authorList>
            <person name="Linnenbach A.J."/>
            <person name="Seng B.A."/>
            <person name="Wu S."/>
            <person name="Robbins S."/>
            <person name="Scollon M."/>
            <person name="Pyrc J.J."/>
            <person name="Druck T."/>
            <person name="Huebner K."/>
        </authorList>
    </citation>
    <scope>NUCLEOTIDE SEQUENCE [MRNA]</scope>
    <scope>VARIANT GLU-216</scope>
    <source>
        <tissue>Placenta</tissue>
    </source>
</reference>
<reference key="3">
    <citation type="journal article" date="1995" name="Int. J. Cancer">
        <title>Cloning of the gene encoding Trop-2, a cell-surface glycoprotein expressed by human carcinomas.</title>
        <authorList>
            <person name="Fornaro M."/>
            <person name="Dell'Arciprete R."/>
            <person name="Stella S."/>
            <person name="Bucci C."/>
            <person name="Nutini M."/>
            <person name="Capri M.G."/>
            <person name="Alberti S."/>
        </authorList>
    </citation>
    <scope>NUCLEOTIDE SEQUENCE [MRNA]</scope>
</reference>
<reference key="4">
    <citation type="submission" date="2003-05" db="EMBL/GenBank/DDBJ databases">
        <title>Cloning of human full-length CDSs in BD Creator(TM) system donor vector.</title>
        <authorList>
            <person name="Kalnine N."/>
            <person name="Chen X."/>
            <person name="Rolfs A."/>
            <person name="Halleck A."/>
            <person name="Hines L."/>
            <person name="Eisenstein S."/>
            <person name="Koundinya M."/>
            <person name="Raphael J."/>
            <person name="Moreira D."/>
            <person name="Kelley T."/>
            <person name="LaBaer J."/>
            <person name="Lin Y."/>
            <person name="Phelan M."/>
            <person name="Farmer A."/>
        </authorList>
    </citation>
    <scope>NUCLEOTIDE SEQUENCE [LARGE SCALE MRNA]</scope>
</reference>
<reference key="5">
    <citation type="submission" date="2004-06" db="EMBL/GenBank/DDBJ databases">
        <title>Cloning of human full open reading frames in Gateway(TM) system entry vector (pDONR201).</title>
        <authorList>
            <person name="Halleck A."/>
            <person name="Ebert L."/>
            <person name="Mkoundinya M."/>
            <person name="Schick M."/>
            <person name="Eisenstein S."/>
            <person name="Neubert P."/>
            <person name="Kstrang K."/>
            <person name="Schatten R."/>
            <person name="Shen B."/>
            <person name="Henze S."/>
            <person name="Mar W."/>
            <person name="Korn B."/>
            <person name="Zuo D."/>
            <person name="Hu Y."/>
            <person name="LaBaer J."/>
        </authorList>
    </citation>
    <scope>NUCLEOTIDE SEQUENCE [LARGE SCALE MRNA]</scope>
</reference>
<reference key="6">
    <citation type="journal article" date="2006" name="Nature">
        <title>The DNA sequence and biological annotation of human chromosome 1.</title>
        <authorList>
            <person name="Gregory S.G."/>
            <person name="Barlow K.F."/>
            <person name="McLay K.E."/>
            <person name="Kaul R."/>
            <person name="Swarbreck D."/>
            <person name="Dunham A."/>
            <person name="Scott C.E."/>
            <person name="Howe K.L."/>
            <person name="Woodfine K."/>
            <person name="Spencer C.C.A."/>
            <person name="Jones M.C."/>
            <person name="Gillson C."/>
            <person name="Searle S."/>
            <person name="Zhou Y."/>
            <person name="Kokocinski F."/>
            <person name="McDonald L."/>
            <person name="Evans R."/>
            <person name="Phillips K."/>
            <person name="Atkinson A."/>
            <person name="Cooper R."/>
            <person name="Jones C."/>
            <person name="Hall R.E."/>
            <person name="Andrews T.D."/>
            <person name="Lloyd C."/>
            <person name="Ainscough R."/>
            <person name="Almeida J.P."/>
            <person name="Ambrose K.D."/>
            <person name="Anderson F."/>
            <person name="Andrew R.W."/>
            <person name="Ashwell R.I.S."/>
            <person name="Aubin K."/>
            <person name="Babbage A.K."/>
            <person name="Bagguley C.L."/>
            <person name="Bailey J."/>
            <person name="Beasley H."/>
            <person name="Bethel G."/>
            <person name="Bird C.P."/>
            <person name="Bray-Allen S."/>
            <person name="Brown J.Y."/>
            <person name="Brown A.J."/>
            <person name="Buckley D."/>
            <person name="Burton J."/>
            <person name="Bye J."/>
            <person name="Carder C."/>
            <person name="Chapman J.C."/>
            <person name="Clark S.Y."/>
            <person name="Clarke G."/>
            <person name="Clee C."/>
            <person name="Cobley V."/>
            <person name="Collier R.E."/>
            <person name="Corby N."/>
            <person name="Coville G.J."/>
            <person name="Davies J."/>
            <person name="Deadman R."/>
            <person name="Dunn M."/>
            <person name="Earthrowl M."/>
            <person name="Ellington A.G."/>
            <person name="Errington H."/>
            <person name="Frankish A."/>
            <person name="Frankland J."/>
            <person name="French L."/>
            <person name="Garner P."/>
            <person name="Garnett J."/>
            <person name="Gay L."/>
            <person name="Ghori M.R.J."/>
            <person name="Gibson R."/>
            <person name="Gilby L.M."/>
            <person name="Gillett W."/>
            <person name="Glithero R.J."/>
            <person name="Grafham D.V."/>
            <person name="Griffiths C."/>
            <person name="Griffiths-Jones S."/>
            <person name="Grocock R."/>
            <person name="Hammond S."/>
            <person name="Harrison E.S.I."/>
            <person name="Hart E."/>
            <person name="Haugen E."/>
            <person name="Heath P.D."/>
            <person name="Holmes S."/>
            <person name="Holt K."/>
            <person name="Howden P.J."/>
            <person name="Hunt A.R."/>
            <person name="Hunt S.E."/>
            <person name="Hunter G."/>
            <person name="Isherwood J."/>
            <person name="James R."/>
            <person name="Johnson C."/>
            <person name="Johnson D."/>
            <person name="Joy A."/>
            <person name="Kay M."/>
            <person name="Kershaw J.K."/>
            <person name="Kibukawa M."/>
            <person name="Kimberley A.M."/>
            <person name="King A."/>
            <person name="Knights A.J."/>
            <person name="Lad H."/>
            <person name="Laird G."/>
            <person name="Lawlor S."/>
            <person name="Leongamornlert D.A."/>
            <person name="Lloyd D.M."/>
            <person name="Loveland J."/>
            <person name="Lovell J."/>
            <person name="Lush M.J."/>
            <person name="Lyne R."/>
            <person name="Martin S."/>
            <person name="Mashreghi-Mohammadi M."/>
            <person name="Matthews L."/>
            <person name="Matthews N.S.W."/>
            <person name="McLaren S."/>
            <person name="Milne S."/>
            <person name="Mistry S."/>
            <person name="Moore M.J.F."/>
            <person name="Nickerson T."/>
            <person name="O'Dell C.N."/>
            <person name="Oliver K."/>
            <person name="Palmeiri A."/>
            <person name="Palmer S.A."/>
            <person name="Parker A."/>
            <person name="Patel D."/>
            <person name="Pearce A.V."/>
            <person name="Peck A.I."/>
            <person name="Pelan S."/>
            <person name="Phelps K."/>
            <person name="Phillimore B.J."/>
            <person name="Plumb R."/>
            <person name="Rajan J."/>
            <person name="Raymond C."/>
            <person name="Rouse G."/>
            <person name="Saenphimmachak C."/>
            <person name="Sehra H.K."/>
            <person name="Sheridan E."/>
            <person name="Shownkeen R."/>
            <person name="Sims S."/>
            <person name="Skuce C.D."/>
            <person name="Smith M."/>
            <person name="Steward C."/>
            <person name="Subramanian S."/>
            <person name="Sycamore N."/>
            <person name="Tracey A."/>
            <person name="Tromans A."/>
            <person name="Van Helmond Z."/>
            <person name="Wall M."/>
            <person name="Wallis J.M."/>
            <person name="White S."/>
            <person name="Whitehead S.L."/>
            <person name="Wilkinson J.E."/>
            <person name="Willey D.L."/>
            <person name="Williams H."/>
            <person name="Wilming L."/>
            <person name="Wray P.W."/>
            <person name="Wu Z."/>
            <person name="Coulson A."/>
            <person name="Vaudin M."/>
            <person name="Sulston J.E."/>
            <person name="Durbin R.M."/>
            <person name="Hubbard T."/>
            <person name="Wooster R."/>
            <person name="Dunham I."/>
            <person name="Carter N.P."/>
            <person name="McVean G."/>
            <person name="Ross M.T."/>
            <person name="Harrow J."/>
            <person name="Olson M.V."/>
            <person name="Beck S."/>
            <person name="Rogers J."/>
            <person name="Bentley D.R."/>
        </authorList>
    </citation>
    <scope>NUCLEOTIDE SEQUENCE [LARGE SCALE GENOMIC DNA]</scope>
</reference>
<reference key="7">
    <citation type="journal article" date="2004" name="Genome Res.">
        <title>The status, quality, and expansion of the NIH full-length cDNA project: the Mammalian Gene Collection (MGC).</title>
        <authorList>
            <consortium name="The MGC Project Team"/>
        </authorList>
    </citation>
    <scope>NUCLEOTIDE SEQUENCE [LARGE SCALE MRNA]</scope>
    <scope>VARIANT GLU-216</scope>
    <source>
        <tissue>Pancreas</tissue>
    </source>
</reference>
<reference key="8">
    <citation type="journal article" date="1999" name="Nat. Genet.">
        <title>Identification of the gene responsible for gelatinous drop-like corneal dystrophy.</title>
        <authorList>
            <person name="Tsujikawa M."/>
            <person name="Kurahashi H."/>
            <person name="Tanaka T."/>
            <person name="Nishida K."/>
            <person name="Shimomura Y."/>
            <person name="Tano Y."/>
            <person name="Nakamura Y."/>
        </authorList>
    </citation>
    <scope>INVOLVEMENT IN GDLD</scope>
</reference>
<reference key="9">
    <citation type="journal article" date="2011" name="BMC Syst. Biol.">
        <title>Initial characterization of the human central proteome.</title>
        <authorList>
            <person name="Burkard T.R."/>
            <person name="Planyavsky M."/>
            <person name="Kaupe I."/>
            <person name="Breitwieser F.P."/>
            <person name="Buerckstuemmer T."/>
            <person name="Bennett K.L."/>
            <person name="Superti-Furga G."/>
            <person name="Colinge J."/>
        </authorList>
    </citation>
    <scope>IDENTIFICATION BY MASS SPECTROMETRY [LARGE SCALE ANALYSIS]</scope>
</reference>
<reference key="10">
    <citation type="journal article" date="2001" name="Invest. Ophthalmol. Vis. Sci.">
        <title>A novel mutation in the M1S1 gene responsible for gelatinous droplike corneal dystrophy.</title>
        <authorList>
            <person name="Tasa G."/>
            <person name="Kals J."/>
            <person name="Muru K."/>
            <person name="Juronen E."/>
            <person name="Piirsoo A."/>
            <person name="Veromann S."/>
            <person name="Janes S."/>
            <person name="Mikelsaar A.V."/>
            <person name="Lang A."/>
        </authorList>
    </citation>
    <scope>VARIANT ALA-173</scope>
</reference>
<feature type="signal peptide" evidence="1">
    <location>
        <begin position="1"/>
        <end position="26"/>
    </location>
</feature>
<feature type="chain" id="PRO_0000022468" description="Tumor-associated calcium signal transducer 2">
    <location>
        <begin position="27"/>
        <end position="323"/>
    </location>
</feature>
<feature type="topological domain" description="Extracellular" evidence="1">
    <location>
        <begin position="27"/>
        <end position="274"/>
    </location>
</feature>
<feature type="transmembrane region" description="Helical" evidence="1">
    <location>
        <begin position="275"/>
        <end position="297"/>
    </location>
</feature>
<feature type="topological domain" description="Cytoplasmic" evidence="1">
    <location>
        <begin position="298"/>
        <end position="323"/>
    </location>
</feature>
<feature type="domain" description="Thyroglobulin type-1" evidence="2">
    <location>
        <begin position="70"/>
        <end position="145"/>
    </location>
</feature>
<feature type="glycosylation site" description="N-linked (GlcNAc...) asparagine" evidence="1">
    <location>
        <position position="33"/>
    </location>
</feature>
<feature type="glycosylation site" description="N-linked (GlcNAc...) asparagine" evidence="1">
    <location>
        <position position="120"/>
    </location>
</feature>
<feature type="glycosylation site" description="N-linked (GlcNAc...) asparagine" evidence="1">
    <location>
        <position position="168"/>
    </location>
</feature>
<feature type="glycosylation site" description="N-linked (GlcNAc...) asparagine" evidence="1">
    <location>
        <position position="208"/>
    </location>
</feature>
<feature type="disulfide bond" evidence="2">
    <location>
        <begin position="73"/>
        <end position="108"/>
    </location>
</feature>
<feature type="disulfide bond" evidence="2">
    <location>
        <begin position="119"/>
        <end position="125"/>
    </location>
</feature>
<feature type="disulfide bond" evidence="2">
    <location>
        <begin position="127"/>
        <end position="145"/>
    </location>
</feature>
<feature type="sequence variant" id="VAR_051407" description="In dbSNP:rs1062964." evidence="6">
    <original>E</original>
    <variation>D</variation>
    <location>
        <position position="147"/>
    </location>
</feature>
<feature type="sequence variant" id="VAR_012451" description="In dbSNP:rs35075952." evidence="4">
    <original>D</original>
    <variation>A</variation>
    <location>
        <position position="173"/>
    </location>
</feature>
<feature type="sequence variant" id="VAR_016981" description="In dbSNP:rs14008." evidence="5 7">
    <original>D</original>
    <variation>E</variation>
    <location>
        <position position="216"/>
    </location>
</feature>
<feature type="sequence conflict" description="In Ref. 5; CAG47056." evidence="8" ref="5">
    <original>G</original>
    <variation>D</variation>
    <location>
        <position position="220"/>
    </location>
</feature>
<feature type="strand" evidence="11">
    <location>
        <begin position="41"/>
        <end position="46"/>
    </location>
</feature>
<feature type="helix" evidence="11">
    <location>
        <begin position="49"/>
        <end position="51"/>
    </location>
</feature>
<feature type="strand" evidence="11">
    <location>
        <begin position="54"/>
        <end position="57"/>
    </location>
</feature>
<feature type="turn" evidence="11">
    <location>
        <begin position="58"/>
        <end position="60"/>
    </location>
</feature>
<feature type="helix" evidence="11">
    <location>
        <begin position="72"/>
        <end position="80"/>
    </location>
</feature>
<feature type="strand" evidence="11">
    <location>
        <begin position="97"/>
        <end position="99"/>
    </location>
</feature>
<feature type="strand" evidence="10">
    <location>
        <begin position="112"/>
        <end position="114"/>
    </location>
</feature>
<feature type="strand" evidence="11">
    <location>
        <begin position="116"/>
        <end position="120"/>
    </location>
</feature>
<feature type="turn" evidence="11">
    <location>
        <begin position="121"/>
        <end position="123"/>
    </location>
</feature>
<feature type="strand" evidence="11">
    <location>
        <begin position="124"/>
        <end position="129"/>
    </location>
</feature>
<feature type="strand" evidence="11">
    <location>
        <begin position="151"/>
        <end position="160"/>
    </location>
</feature>
<feature type="helix" evidence="11">
    <location>
        <begin position="169"/>
        <end position="182"/>
    </location>
</feature>
<feature type="helix" evidence="11">
    <location>
        <begin position="188"/>
        <end position="190"/>
    </location>
</feature>
<feature type="strand" evidence="11">
    <location>
        <begin position="191"/>
        <end position="197"/>
    </location>
</feature>
<feature type="strand" evidence="11">
    <location>
        <begin position="200"/>
        <end position="206"/>
    </location>
</feature>
<feature type="helix" evidence="11">
    <location>
        <begin position="209"/>
        <end position="211"/>
    </location>
</feature>
<feature type="helix" evidence="11">
    <location>
        <begin position="219"/>
        <end position="230"/>
    </location>
</feature>
<feature type="strand" evidence="11">
    <location>
        <begin position="237"/>
        <end position="239"/>
    </location>
</feature>
<feature type="strand" evidence="11">
    <location>
        <begin position="253"/>
        <end position="264"/>
    </location>
</feature>
<feature type="helix" evidence="9">
    <location>
        <begin position="299"/>
        <end position="317"/>
    </location>
</feature>
<accession>P09758</accession>
<accession>Q15658</accession>
<accession>Q6FG48</accession>
<accession>Q7Z7Q4</accession>
<accession>Q96QD2</accession>
<comment type="function">
    <text>May function as a growth factor receptor.</text>
</comment>
<comment type="interaction">
    <interactant intactId="EBI-4324738">
        <id>P09758</id>
    </interactant>
    <interactant intactId="EBI-11749135">
        <id>Q8IUG1</id>
        <label>KRTAP1-3</label>
    </interactant>
    <organismsDiffer>false</organismsDiffer>
    <experiments>3</experiments>
</comment>
<comment type="interaction">
    <interactant intactId="EBI-4324738">
        <id>P09758</id>
    </interactant>
    <interactant intactId="EBI-10171774">
        <id>P60410</id>
        <label>KRTAP10-8</label>
    </interactant>
    <organismsDiffer>false</organismsDiffer>
    <experiments>3</experiments>
</comment>
<comment type="interaction">
    <interactant intactId="EBI-4324738">
        <id>P09758</id>
    </interactant>
    <interactant intactId="EBI-11958178">
        <id>Q701N4</id>
        <label>KRTAP5-2</label>
    </interactant>
    <organismsDiffer>false</organismsDiffer>
    <experiments>3</experiments>
</comment>
<comment type="interaction">
    <interactant intactId="EBI-4324738">
        <id>P09758</id>
    </interactant>
    <interactant intactId="EBI-11973993">
        <id>Q5TA81</id>
        <label>LCE2C</label>
    </interactant>
    <organismsDiffer>false</organismsDiffer>
    <experiments>3</experiments>
</comment>
<comment type="subcellular location">
    <subcellularLocation>
        <location>Membrane</location>
        <topology>Single-pass type I membrane protein</topology>
    </subcellularLocation>
</comment>
<comment type="tissue specificity">
    <text>Placenta, pancreatic carcinoma cell lines.</text>
</comment>
<comment type="PTM">
    <text>The N-terminus is blocked.</text>
</comment>
<comment type="disease" evidence="3">
    <disease id="DI-01651">
        <name>Corneal dystrophy, gelatinous drop-like</name>
        <acronym>GDLD</acronym>
        <description>A form of lattice corneal dystrophy, a class of inherited stromal amyloidoses characterized by pathognomonic branching lattice figures in the cornea. GDLD is an autosomal recessive disorder characterized by severe corneal amyloidosis leading to blindness. Clinical manifestations, which appear in the first decade of life, include blurred vision, photophobia, and foreign-body sensation. By the third decade, raised, yellowish-gray, gelatinous masses severely impair visual acuity.</description>
        <dbReference type="MIM" id="204870"/>
    </disease>
    <text>The disease is caused by variants affecting the gene represented in this entry.</text>
</comment>
<comment type="similarity">
    <text evidence="8">Belongs to the EPCAM family.</text>
</comment>
<gene>
    <name type="primary">TACSTD2</name>
    <name type="synonym">GA733-1</name>
    <name type="synonym">M1S1</name>
    <name type="synonym">TROP2</name>
</gene>
<protein>
    <recommendedName>
        <fullName>Tumor-associated calcium signal transducer 2</fullName>
    </recommendedName>
    <alternativeName>
        <fullName>Cell surface glycoprotein Trop-2</fullName>
    </alternativeName>
    <alternativeName>
        <fullName>Membrane component chromosome 1 surface marker 1</fullName>
    </alternativeName>
    <alternativeName>
        <fullName>Pancreatic carcinoma marker protein GA733-1</fullName>
    </alternativeName>
</protein>
<keyword id="KW-0002">3D-structure</keyword>
<keyword id="KW-0034">Amyloid</keyword>
<keyword id="KW-1008">Amyloidosis</keyword>
<keyword id="KW-1212">Corneal dystrophy</keyword>
<keyword id="KW-1015">Disulfide bond</keyword>
<keyword id="KW-0325">Glycoprotein</keyword>
<keyword id="KW-0472">Membrane</keyword>
<keyword id="KW-1267">Proteomics identification</keyword>
<keyword id="KW-1185">Reference proteome</keyword>
<keyword id="KW-0716">Sensory transduction</keyword>
<keyword id="KW-0732">Signal</keyword>
<keyword id="KW-0812">Transmembrane</keyword>
<keyword id="KW-1133">Transmembrane helix</keyword>
<keyword id="KW-0825">Tumor antigen</keyword>
<keyword id="KW-0844">Vision</keyword>
<name>TACD2_HUMAN</name>
<dbReference type="EMBL" id="X13425">
    <property type="protein sequence ID" value="CAA31781.1"/>
    <property type="molecule type" value="mRNA"/>
</dbReference>
<dbReference type="EMBL" id="J04152">
    <property type="protein sequence ID" value="AAA52505.1"/>
    <property type="molecule type" value="Genomic_DNA"/>
</dbReference>
<dbReference type="EMBL" id="X77753">
    <property type="protein sequence ID" value="CAA54799.1"/>
    <property type="molecule type" value="mRNA"/>
</dbReference>
<dbReference type="EMBL" id="X77754">
    <property type="protein sequence ID" value="CAA54801.1"/>
    <property type="molecule type" value="mRNA"/>
</dbReference>
<dbReference type="EMBL" id="BT007255">
    <property type="protein sequence ID" value="AAP35919.1"/>
    <property type="molecule type" value="mRNA"/>
</dbReference>
<dbReference type="EMBL" id="CR542260">
    <property type="protein sequence ID" value="CAG47056.1"/>
    <property type="molecule type" value="mRNA"/>
</dbReference>
<dbReference type="EMBL" id="AL035411">
    <property type="status" value="NOT_ANNOTATED_CDS"/>
    <property type="molecule type" value="Genomic_DNA"/>
</dbReference>
<dbReference type="EMBL" id="BC009409">
    <property type="protein sequence ID" value="AAH09409.1"/>
    <property type="molecule type" value="mRNA"/>
</dbReference>
<dbReference type="CCDS" id="CCDS609.1"/>
<dbReference type="PIR" id="A48149">
    <property type="entry name" value="A48149"/>
</dbReference>
<dbReference type="RefSeq" id="NP_002344.2">
    <property type="nucleotide sequence ID" value="NM_002353.3"/>
</dbReference>
<dbReference type="PDB" id="2MAE">
    <property type="method" value="NMR"/>
    <property type="chains" value="A=298-323"/>
</dbReference>
<dbReference type="PDB" id="2MVK">
    <property type="method" value="NMR"/>
    <property type="chains" value="A=298-323"/>
</dbReference>
<dbReference type="PDB" id="2MVL">
    <property type="method" value="NMR"/>
    <property type="chains" value="A=298-323"/>
</dbReference>
<dbReference type="PDB" id="7E5M">
    <property type="method" value="X-ray"/>
    <property type="resolution" value="3.20 A"/>
    <property type="chains" value="A/B=33-268"/>
</dbReference>
<dbReference type="PDB" id="7E5N">
    <property type="method" value="X-ray"/>
    <property type="resolution" value="3.20 A"/>
    <property type="chains" value="A/B/C/D=1-323"/>
</dbReference>
<dbReference type="PDB" id="7PEE">
    <property type="method" value="X-ray"/>
    <property type="resolution" value="2.81 A"/>
    <property type="chains" value="A/B/C/D=31-274"/>
</dbReference>
<dbReference type="PDBsum" id="2MAE"/>
<dbReference type="PDBsum" id="2MVK"/>
<dbReference type="PDBsum" id="2MVL"/>
<dbReference type="PDBsum" id="7E5M"/>
<dbReference type="PDBsum" id="7E5N"/>
<dbReference type="PDBsum" id="7PEE"/>
<dbReference type="BMRB" id="P09758"/>
<dbReference type="SMR" id="P09758"/>
<dbReference type="BioGRID" id="110248">
    <property type="interactions" value="214"/>
</dbReference>
<dbReference type="CORUM" id="P09758"/>
<dbReference type="FunCoup" id="P09758">
    <property type="interactions" value="112"/>
</dbReference>
<dbReference type="IntAct" id="P09758">
    <property type="interactions" value="126"/>
</dbReference>
<dbReference type="STRING" id="9606.ENSP00000360269"/>
<dbReference type="ChEMBL" id="CHEMBL3856163"/>
<dbReference type="DrugBank" id="DB12893">
    <property type="generic name" value="Sacituzumab govitecan"/>
</dbReference>
<dbReference type="DrugCentral" id="P09758"/>
<dbReference type="GuidetoPHARMACOLOGY" id="2837"/>
<dbReference type="TCDB" id="8.A.237.1.1">
    <property type="family name" value="the tumor-associated calcium signal transducer 2 (tacstd2) family"/>
</dbReference>
<dbReference type="GlyConnect" id="1865">
    <property type="glycosylation" value="8 N-Linked glycans (3 sites)"/>
</dbReference>
<dbReference type="GlyCosmos" id="P09758">
    <property type="glycosylation" value="4 sites, 8 glycans"/>
</dbReference>
<dbReference type="GlyGen" id="P09758">
    <property type="glycosylation" value="9 sites, 32 N-linked glycans (3 sites), 2 O-linked glycans (3 sites)"/>
</dbReference>
<dbReference type="iPTMnet" id="P09758"/>
<dbReference type="MetOSite" id="P09758"/>
<dbReference type="PhosphoSitePlus" id="P09758"/>
<dbReference type="BioMuta" id="TACSTD2"/>
<dbReference type="DMDM" id="160113102"/>
<dbReference type="CPTAC" id="CPTAC-1510"/>
<dbReference type="jPOST" id="P09758"/>
<dbReference type="MassIVE" id="P09758"/>
<dbReference type="PaxDb" id="9606-ENSP00000360269"/>
<dbReference type="PeptideAtlas" id="P09758"/>
<dbReference type="ProteomicsDB" id="52267"/>
<dbReference type="Pumba" id="P09758"/>
<dbReference type="ABCD" id="P09758">
    <property type="antibodies" value="2 sequenced antibodies"/>
</dbReference>
<dbReference type="Antibodypedia" id="33262">
    <property type="antibodies" value="838 antibodies from 48 providers"/>
</dbReference>
<dbReference type="CPTC" id="P09758">
    <property type="antibodies" value="3 antibodies"/>
</dbReference>
<dbReference type="DNASU" id="4070"/>
<dbReference type="Ensembl" id="ENST00000371225.4">
    <property type="protein sequence ID" value="ENSP00000360269.2"/>
    <property type="gene ID" value="ENSG00000184292.7"/>
</dbReference>
<dbReference type="GeneID" id="4070"/>
<dbReference type="KEGG" id="hsa:4070"/>
<dbReference type="MANE-Select" id="ENST00000371225.4">
    <property type="protein sequence ID" value="ENSP00000360269.2"/>
    <property type="RefSeq nucleotide sequence ID" value="NM_002353.3"/>
    <property type="RefSeq protein sequence ID" value="NP_002344.2"/>
</dbReference>
<dbReference type="UCSC" id="uc001cyz.5">
    <property type="organism name" value="human"/>
</dbReference>
<dbReference type="AGR" id="HGNC:11530"/>
<dbReference type="CTD" id="4070"/>
<dbReference type="DisGeNET" id="4070"/>
<dbReference type="GeneCards" id="TACSTD2"/>
<dbReference type="HGNC" id="HGNC:11530">
    <property type="gene designation" value="TACSTD2"/>
</dbReference>
<dbReference type="HPA" id="ENSG00000184292">
    <property type="expression patterns" value="Tissue enhanced (esophagus, salivary gland, skin)"/>
</dbReference>
<dbReference type="MalaCards" id="TACSTD2"/>
<dbReference type="MIM" id="137290">
    <property type="type" value="gene"/>
</dbReference>
<dbReference type="MIM" id="204870">
    <property type="type" value="phenotype"/>
</dbReference>
<dbReference type="neXtProt" id="NX_P09758"/>
<dbReference type="OpenTargets" id="ENSG00000184292"/>
<dbReference type="Orphanet" id="98957">
    <property type="disease" value="Gelatinous drop-like corneal dystrophy"/>
</dbReference>
<dbReference type="PharmGKB" id="PA36305"/>
<dbReference type="VEuPathDB" id="HostDB:ENSG00000184292"/>
<dbReference type="eggNOG" id="ENOG502QVSU">
    <property type="taxonomic scope" value="Eukaryota"/>
</dbReference>
<dbReference type="GeneTree" id="ENSGT00390000018245"/>
<dbReference type="HOGENOM" id="CLU_075326_0_0_1"/>
<dbReference type="InParanoid" id="P09758"/>
<dbReference type="OMA" id="YDPDCDH"/>
<dbReference type="OrthoDB" id="8953056at2759"/>
<dbReference type="PAN-GO" id="P09758">
    <property type="GO annotations" value="3 GO annotations based on evolutionary models"/>
</dbReference>
<dbReference type="PhylomeDB" id="P09758"/>
<dbReference type="TreeFam" id="TF332767"/>
<dbReference type="PathwayCommons" id="P09758"/>
<dbReference type="SignaLink" id="P09758"/>
<dbReference type="SIGNOR" id="P09758"/>
<dbReference type="BioGRID-ORCS" id="4070">
    <property type="hits" value="4 hits in 1143 CRISPR screens"/>
</dbReference>
<dbReference type="ChiTaRS" id="TACSTD2">
    <property type="organism name" value="human"/>
</dbReference>
<dbReference type="EvolutionaryTrace" id="P09758"/>
<dbReference type="GeneWiki" id="TACSTD2"/>
<dbReference type="GenomeRNAi" id="4070"/>
<dbReference type="Pharos" id="P09758">
    <property type="development level" value="Tclin"/>
</dbReference>
<dbReference type="PRO" id="PR:P09758"/>
<dbReference type="Proteomes" id="UP000005640">
    <property type="component" value="Chromosome 1"/>
</dbReference>
<dbReference type="RNAct" id="P09758">
    <property type="molecule type" value="protein"/>
</dbReference>
<dbReference type="Bgee" id="ENSG00000184292">
    <property type="expression patterns" value="Expressed in palpebral conjunctiva and 153 other cell types or tissues"/>
</dbReference>
<dbReference type="GO" id="GO:0009925">
    <property type="term" value="C:basal plasma membrane"/>
    <property type="evidence" value="ECO:0000250"/>
    <property type="project" value="UniProtKB"/>
</dbReference>
<dbReference type="GO" id="GO:0005829">
    <property type="term" value="C:cytosol"/>
    <property type="evidence" value="ECO:0000304"/>
    <property type="project" value="ProtInc"/>
</dbReference>
<dbReference type="GO" id="GO:0070062">
    <property type="term" value="C:extracellular exosome"/>
    <property type="evidence" value="ECO:0007005"/>
    <property type="project" value="UniProtKB"/>
</dbReference>
<dbReference type="GO" id="GO:0005615">
    <property type="term" value="C:extracellular space"/>
    <property type="evidence" value="ECO:0000318"/>
    <property type="project" value="GO_Central"/>
</dbReference>
<dbReference type="GO" id="GO:0016328">
    <property type="term" value="C:lateral plasma membrane"/>
    <property type="evidence" value="ECO:0000250"/>
    <property type="project" value="UniProtKB"/>
</dbReference>
<dbReference type="GO" id="GO:0016020">
    <property type="term" value="C:membrane"/>
    <property type="evidence" value="ECO:0000304"/>
    <property type="project" value="ProtInc"/>
</dbReference>
<dbReference type="GO" id="GO:0005634">
    <property type="term" value="C:nucleus"/>
    <property type="evidence" value="ECO:0000318"/>
    <property type="project" value="GO_Central"/>
</dbReference>
<dbReference type="GO" id="GO:0090191">
    <property type="term" value="P:negative regulation of branching involved in ureteric bud morphogenesis"/>
    <property type="evidence" value="ECO:0000250"/>
    <property type="project" value="UniProtKB"/>
</dbReference>
<dbReference type="GO" id="GO:2000146">
    <property type="term" value="P:negative regulation of cell motility"/>
    <property type="evidence" value="ECO:0000250"/>
    <property type="project" value="UniProtKB"/>
</dbReference>
<dbReference type="GO" id="GO:0010633">
    <property type="term" value="P:negative regulation of epithelial cell migration"/>
    <property type="evidence" value="ECO:0000250"/>
    <property type="project" value="UniProtKB"/>
</dbReference>
<dbReference type="GO" id="GO:1900028">
    <property type="term" value="P:negative regulation of ruffle assembly"/>
    <property type="evidence" value="ECO:0000250"/>
    <property type="project" value="UniProtKB"/>
</dbReference>
<dbReference type="GO" id="GO:0051497">
    <property type="term" value="P:negative regulation of stress fiber assembly"/>
    <property type="evidence" value="ECO:0000250"/>
    <property type="project" value="UniProtKB"/>
</dbReference>
<dbReference type="GO" id="GO:1900025">
    <property type="term" value="P:negative regulation of substrate adhesion-dependent cell spreading"/>
    <property type="evidence" value="ECO:0000250"/>
    <property type="project" value="UniProtKB"/>
</dbReference>
<dbReference type="GO" id="GO:2000738">
    <property type="term" value="P:positive regulation of stem cell differentiation"/>
    <property type="evidence" value="ECO:0000318"/>
    <property type="project" value="GO_Central"/>
</dbReference>
<dbReference type="GO" id="GO:0050678">
    <property type="term" value="P:regulation of epithelial cell proliferation"/>
    <property type="evidence" value="ECO:0007669"/>
    <property type="project" value="Ensembl"/>
</dbReference>
<dbReference type="GO" id="GO:0060675">
    <property type="term" value="P:ureteric bud morphogenesis"/>
    <property type="evidence" value="ECO:0007669"/>
    <property type="project" value="Ensembl"/>
</dbReference>
<dbReference type="GO" id="GO:0007601">
    <property type="term" value="P:visual perception"/>
    <property type="evidence" value="ECO:0000304"/>
    <property type="project" value="ProtInc"/>
</dbReference>
<dbReference type="CDD" id="cd00191">
    <property type="entry name" value="TY"/>
    <property type="match status" value="1"/>
</dbReference>
<dbReference type="FunFam" id="4.10.800.10:FF:000008">
    <property type="entry name" value="tumor-associated calcium signal transducer 2"/>
    <property type="match status" value="1"/>
</dbReference>
<dbReference type="Gene3D" id="4.10.800.10">
    <property type="entry name" value="Thyroglobulin type-1"/>
    <property type="match status" value="1"/>
</dbReference>
<dbReference type="InterPro" id="IPR049420">
    <property type="entry name" value="EPCAM-Trop-2_C"/>
</dbReference>
<dbReference type="InterPro" id="IPR043406">
    <property type="entry name" value="EPCAM/Trop-2"/>
</dbReference>
<dbReference type="InterPro" id="IPR041630">
    <property type="entry name" value="EpCAM_N"/>
</dbReference>
<dbReference type="InterPro" id="IPR000716">
    <property type="entry name" value="Thyroglobulin_1"/>
</dbReference>
<dbReference type="InterPro" id="IPR036857">
    <property type="entry name" value="Thyroglobulin_1_sf"/>
</dbReference>
<dbReference type="PANTHER" id="PTHR14168">
    <property type="entry name" value="TUMOR-ASSOCIATED CALCIUM SIGNAL TRANSDUCER"/>
    <property type="match status" value="1"/>
</dbReference>
<dbReference type="PANTHER" id="PTHR14168:SF5">
    <property type="entry name" value="TUMOR-ASSOCIATED CALCIUM SIGNAL TRANSDUCER 2"/>
    <property type="match status" value="1"/>
</dbReference>
<dbReference type="Pfam" id="PF21283">
    <property type="entry name" value="EPCAM-Trop-2_C"/>
    <property type="match status" value="1"/>
</dbReference>
<dbReference type="Pfam" id="PF18635">
    <property type="entry name" value="EpCAM_N"/>
    <property type="match status" value="1"/>
</dbReference>
<dbReference type="Pfam" id="PF00086">
    <property type="entry name" value="Thyroglobulin_1"/>
    <property type="match status" value="1"/>
</dbReference>
<dbReference type="SMART" id="SM00211">
    <property type="entry name" value="TY"/>
    <property type="match status" value="1"/>
</dbReference>
<dbReference type="SUPFAM" id="SSF57610">
    <property type="entry name" value="Thyroglobulin type-1 domain"/>
    <property type="match status" value="1"/>
</dbReference>
<dbReference type="PROSITE" id="PS00484">
    <property type="entry name" value="THYROGLOBULIN_1_1"/>
    <property type="match status" value="1"/>
</dbReference>
<dbReference type="PROSITE" id="PS51162">
    <property type="entry name" value="THYROGLOBULIN_1_2"/>
    <property type="match status" value="1"/>
</dbReference>